<dbReference type="EMBL" id="AF184051">
    <property type="protein sequence ID" value="AAG16965.2"/>
    <property type="molecule type" value="Genomic_DNA"/>
</dbReference>
<dbReference type="EMBL" id="U03526">
    <property type="protein sequence ID" value="AAD12553.1"/>
    <property type="molecule type" value="Genomic_DNA"/>
</dbReference>
<dbReference type="SMR" id="P48518"/>
<dbReference type="GO" id="GO:0005743">
    <property type="term" value="C:mitochondrial inner membrane"/>
    <property type="evidence" value="ECO:0007669"/>
    <property type="project" value="UniProtKB-SubCell"/>
</dbReference>
<dbReference type="GO" id="GO:0045275">
    <property type="term" value="C:respiratory chain complex III"/>
    <property type="evidence" value="ECO:0007669"/>
    <property type="project" value="InterPro"/>
</dbReference>
<dbReference type="GO" id="GO:0046872">
    <property type="term" value="F:metal ion binding"/>
    <property type="evidence" value="ECO:0007669"/>
    <property type="project" value="UniProtKB-KW"/>
</dbReference>
<dbReference type="GO" id="GO:0008121">
    <property type="term" value="F:ubiquinol-cytochrome-c reductase activity"/>
    <property type="evidence" value="ECO:0007669"/>
    <property type="project" value="InterPro"/>
</dbReference>
<dbReference type="GO" id="GO:0006122">
    <property type="term" value="P:mitochondrial electron transport, ubiquinol to cytochrome c"/>
    <property type="evidence" value="ECO:0007669"/>
    <property type="project" value="TreeGrafter"/>
</dbReference>
<dbReference type="CDD" id="cd00290">
    <property type="entry name" value="cytochrome_b_C"/>
    <property type="match status" value="1"/>
</dbReference>
<dbReference type="CDD" id="cd00284">
    <property type="entry name" value="Cytochrome_b_N"/>
    <property type="match status" value="1"/>
</dbReference>
<dbReference type="FunFam" id="1.20.810.10:FF:000002">
    <property type="entry name" value="Cytochrome b"/>
    <property type="match status" value="1"/>
</dbReference>
<dbReference type="Gene3D" id="1.20.810.10">
    <property type="entry name" value="Cytochrome Bc1 Complex, Chain C"/>
    <property type="match status" value="1"/>
</dbReference>
<dbReference type="InterPro" id="IPR005798">
    <property type="entry name" value="Cyt_b/b6_C"/>
</dbReference>
<dbReference type="InterPro" id="IPR036150">
    <property type="entry name" value="Cyt_b/b6_C_sf"/>
</dbReference>
<dbReference type="InterPro" id="IPR005797">
    <property type="entry name" value="Cyt_b/b6_N"/>
</dbReference>
<dbReference type="InterPro" id="IPR027387">
    <property type="entry name" value="Cytb/b6-like_sf"/>
</dbReference>
<dbReference type="InterPro" id="IPR030689">
    <property type="entry name" value="Cytochrome_b"/>
</dbReference>
<dbReference type="InterPro" id="IPR048260">
    <property type="entry name" value="Cytochrome_b_C_euk/bac"/>
</dbReference>
<dbReference type="InterPro" id="IPR048259">
    <property type="entry name" value="Cytochrome_b_N_euk/bac"/>
</dbReference>
<dbReference type="InterPro" id="IPR016174">
    <property type="entry name" value="Di-haem_cyt_TM"/>
</dbReference>
<dbReference type="PANTHER" id="PTHR19271">
    <property type="entry name" value="CYTOCHROME B"/>
    <property type="match status" value="1"/>
</dbReference>
<dbReference type="PANTHER" id="PTHR19271:SF16">
    <property type="entry name" value="CYTOCHROME B"/>
    <property type="match status" value="1"/>
</dbReference>
<dbReference type="Pfam" id="PF00032">
    <property type="entry name" value="Cytochrom_B_C"/>
    <property type="match status" value="1"/>
</dbReference>
<dbReference type="Pfam" id="PF00033">
    <property type="entry name" value="Cytochrome_B"/>
    <property type="match status" value="1"/>
</dbReference>
<dbReference type="PIRSF" id="PIRSF038885">
    <property type="entry name" value="COB"/>
    <property type="match status" value="1"/>
</dbReference>
<dbReference type="SUPFAM" id="SSF81648">
    <property type="entry name" value="a domain/subunit of cytochrome bc1 complex (Ubiquinol-cytochrome c reductase)"/>
    <property type="match status" value="1"/>
</dbReference>
<dbReference type="SUPFAM" id="SSF81342">
    <property type="entry name" value="Transmembrane di-heme cytochromes"/>
    <property type="match status" value="1"/>
</dbReference>
<dbReference type="PROSITE" id="PS51003">
    <property type="entry name" value="CYTB_CTER"/>
    <property type="match status" value="1"/>
</dbReference>
<dbReference type="PROSITE" id="PS51002">
    <property type="entry name" value="CYTB_NTER"/>
    <property type="match status" value="1"/>
</dbReference>
<keyword id="KW-0249">Electron transport</keyword>
<keyword id="KW-0349">Heme</keyword>
<keyword id="KW-0408">Iron</keyword>
<keyword id="KW-0472">Membrane</keyword>
<keyword id="KW-0479">Metal-binding</keyword>
<keyword id="KW-0496">Mitochondrion</keyword>
<keyword id="KW-0999">Mitochondrion inner membrane</keyword>
<keyword id="KW-0679">Respiratory chain</keyword>
<keyword id="KW-0812">Transmembrane</keyword>
<keyword id="KW-1133">Transmembrane helix</keyword>
<keyword id="KW-0813">Transport</keyword>
<keyword id="KW-0830">Ubiquinone</keyword>
<evidence type="ECO:0000250" key="1"/>
<evidence type="ECO:0000250" key="2">
    <source>
        <dbReference type="UniProtKB" id="P00157"/>
    </source>
</evidence>
<evidence type="ECO:0000255" key="3">
    <source>
        <dbReference type="PROSITE-ProRule" id="PRU00967"/>
    </source>
</evidence>
<evidence type="ECO:0000255" key="4">
    <source>
        <dbReference type="PROSITE-ProRule" id="PRU00968"/>
    </source>
</evidence>
<evidence type="ECO:0000305" key="5"/>
<reference key="1">
    <citation type="journal article" date="2001" name="J. Mammal.">
        <title>Diversification in the genus Akodon (Rodentia: Sigmodontinae) in southeastern South America: mitochondrial DNA sequence analysis.</title>
        <authorList>
            <person name="Geise L."/>
            <person name="Smith M.F."/>
            <person name="Patton J.L."/>
        </authorList>
    </citation>
    <scope>NUCLEOTIDE SEQUENCE [GENOMIC DNA]</scope>
</reference>
<reference key="2">
    <citation type="journal article" date="1993" name="Biol. J. Linn. Soc. Lond.">
        <title>The diversification of South American murid rodents: evidence from mitochondrial DNA sequence data for the akodontine tribe.</title>
        <authorList>
            <person name="Smith M.F."/>
            <person name="Patton J.L."/>
        </authorList>
    </citation>
    <scope>NUCLEOTIDE SEQUENCE [GENOMIC DNA] OF 1-267</scope>
    <source>
        <strain>Isolate UMMZ 133958</strain>
        <tissue>Liver</tissue>
    </source>
</reference>
<name>CYB_AKOCU</name>
<organism>
    <name type="scientific">Akodon cursor</name>
    <name type="common">Cursor grass mouse</name>
    <dbReference type="NCBI Taxonomy" id="29096"/>
    <lineage>
        <taxon>Eukaryota</taxon>
        <taxon>Metazoa</taxon>
        <taxon>Chordata</taxon>
        <taxon>Craniata</taxon>
        <taxon>Vertebrata</taxon>
        <taxon>Euteleostomi</taxon>
        <taxon>Mammalia</taxon>
        <taxon>Eutheria</taxon>
        <taxon>Euarchontoglires</taxon>
        <taxon>Glires</taxon>
        <taxon>Rodentia</taxon>
        <taxon>Myomorpha</taxon>
        <taxon>Muroidea</taxon>
        <taxon>Cricetidae</taxon>
        <taxon>Sigmodontinae</taxon>
        <taxon>Akodon</taxon>
    </lineage>
</organism>
<geneLocation type="mitochondrion"/>
<comment type="function">
    <text evidence="2">Component of the ubiquinol-cytochrome c reductase complex (complex III or cytochrome b-c1 complex) that is part of the mitochondrial respiratory chain. The b-c1 complex mediates electron transfer from ubiquinol to cytochrome c. Contributes to the generation of a proton gradient across the mitochondrial membrane that is then used for ATP synthesis.</text>
</comment>
<comment type="cofactor">
    <cofactor evidence="2">
        <name>heme b</name>
        <dbReference type="ChEBI" id="CHEBI:60344"/>
    </cofactor>
    <text evidence="2">Binds 2 heme b groups non-covalently.</text>
</comment>
<comment type="subunit">
    <text evidence="2">The cytochrome bc1 complex contains 11 subunits: 3 respiratory subunits (MT-CYB, CYC1 and UQCRFS1), 2 core proteins (UQCRC1 and UQCRC2) and 6 low-molecular weight proteins (UQCRH/QCR6, UQCRB/QCR7, UQCRQ/QCR8, UQCR10/QCR9, UQCR11/QCR10 and a cleavage product of UQCRFS1). This cytochrome bc1 complex then forms a dimer.</text>
</comment>
<comment type="subcellular location">
    <subcellularLocation>
        <location evidence="2">Mitochondrion inner membrane</location>
        <topology evidence="2">Multi-pass membrane protein</topology>
    </subcellularLocation>
</comment>
<comment type="miscellaneous">
    <text evidence="1">Heme 1 (or BL or b562) is low-potential and absorbs at about 562 nm, and heme 2 (or BH or b566) is high-potential and absorbs at about 566 nm.</text>
</comment>
<comment type="similarity">
    <text evidence="3 4">Belongs to the cytochrome b family.</text>
</comment>
<comment type="caution">
    <text evidence="2">The full-length protein contains only eight transmembrane helices, not nine as predicted by bioinformatics tools.</text>
</comment>
<sequence length="379" mass="42545">MKILRKNHPLLKIVNHSFIDLPTPSNISSWWNFGSLLGMCLIIQILTGLFLAMHYTSDTTTAFSSVAHICRDVNYGWLIRYLHANGASMFFICLFIHVGRGIYYGSYVLSETWNIGIILFLTTMATAFVGYVLPWGQMSFWGATVITNLLSAIPYIGGTLFEWIWGGFSVDKATLARFFAFHFILPFIIAAFALVHLLFLHETGSNNPSGLNSDSDKIPFHPYYTTKDLLGIFLLLLVLMILVLFFPDILGDPDNFTPANPLNTPAHIKPEWYFLFAYAILRSIPNKLGGVLALVLSILILAAFPLLNTSKQHGLIFRPVTQVIYWIFIANLLVLTWIGGQPVEYPFTTIGQIASITYFAIIIILIPVSNTIENNIIKL</sequence>
<accession>P48518</accession>
<accession>Q9GAS2</accession>
<feature type="chain" id="PRO_0000060543" description="Cytochrome b">
    <location>
        <begin position="1"/>
        <end position="379"/>
    </location>
</feature>
<feature type="transmembrane region" description="Helical" evidence="2">
    <location>
        <begin position="33"/>
        <end position="53"/>
    </location>
</feature>
<feature type="transmembrane region" description="Helical" evidence="2">
    <location>
        <begin position="77"/>
        <end position="98"/>
    </location>
</feature>
<feature type="transmembrane region" description="Helical" evidence="2">
    <location>
        <begin position="113"/>
        <end position="133"/>
    </location>
</feature>
<feature type="transmembrane region" description="Helical" evidence="2">
    <location>
        <begin position="178"/>
        <end position="198"/>
    </location>
</feature>
<feature type="transmembrane region" description="Helical" evidence="2">
    <location>
        <begin position="226"/>
        <end position="246"/>
    </location>
</feature>
<feature type="transmembrane region" description="Helical" evidence="2">
    <location>
        <begin position="288"/>
        <end position="308"/>
    </location>
</feature>
<feature type="transmembrane region" description="Helical" evidence="2">
    <location>
        <begin position="320"/>
        <end position="340"/>
    </location>
</feature>
<feature type="transmembrane region" description="Helical" evidence="2">
    <location>
        <begin position="347"/>
        <end position="367"/>
    </location>
</feature>
<feature type="binding site" description="axial binding residue" evidence="2">
    <location>
        <position position="83"/>
    </location>
    <ligand>
        <name>heme b</name>
        <dbReference type="ChEBI" id="CHEBI:60344"/>
        <label>b562</label>
    </ligand>
    <ligandPart>
        <name>Fe</name>
        <dbReference type="ChEBI" id="CHEBI:18248"/>
    </ligandPart>
</feature>
<feature type="binding site" description="axial binding residue" evidence="2">
    <location>
        <position position="97"/>
    </location>
    <ligand>
        <name>heme b</name>
        <dbReference type="ChEBI" id="CHEBI:60344"/>
        <label>b566</label>
    </ligand>
    <ligandPart>
        <name>Fe</name>
        <dbReference type="ChEBI" id="CHEBI:18248"/>
    </ligandPart>
</feature>
<feature type="binding site" description="axial binding residue" evidence="2">
    <location>
        <position position="182"/>
    </location>
    <ligand>
        <name>heme b</name>
        <dbReference type="ChEBI" id="CHEBI:60344"/>
        <label>b562</label>
    </ligand>
    <ligandPart>
        <name>Fe</name>
        <dbReference type="ChEBI" id="CHEBI:18248"/>
    </ligandPart>
</feature>
<feature type="binding site" description="axial binding residue" evidence="2">
    <location>
        <position position="196"/>
    </location>
    <ligand>
        <name>heme b</name>
        <dbReference type="ChEBI" id="CHEBI:60344"/>
        <label>b566</label>
    </ligand>
    <ligandPart>
        <name>Fe</name>
        <dbReference type="ChEBI" id="CHEBI:18248"/>
    </ligandPart>
</feature>
<feature type="binding site" evidence="2">
    <location>
        <position position="201"/>
    </location>
    <ligand>
        <name>a ubiquinone</name>
        <dbReference type="ChEBI" id="CHEBI:16389"/>
    </ligand>
</feature>
<feature type="sequence conflict" description="In Ref. 2; AAD12553." evidence="5" ref="2">
    <original>I</original>
    <variation>V</variation>
    <location>
        <position position="42"/>
    </location>
</feature>
<feature type="sequence conflict" description="In Ref. 2; AAD12553." evidence="5" ref="2">
    <original>F</original>
    <variation>L</variation>
    <location>
        <position position="120"/>
    </location>
</feature>
<feature type="sequence conflict" description="In Ref. 2; AAD12553." evidence="5" ref="2">
    <original>G</original>
    <variation>N</variation>
    <location>
        <position position="158"/>
    </location>
</feature>
<feature type="sequence conflict" description="In Ref. 2; AAD12553." evidence="5" ref="2">
    <original>F</original>
    <variation>V</variation>
    <location>
        <position position="161"/>
    </location>
</feature>
<feature type="sequence conflict" description="In Ref. 2; AAD12553." evidence="5" ref="2">
    <original>A</original>
    <variation>T</variation>
    <location>
        <position position="176"/>
    </location>
</feature>
<feature type="sequence conflict" description="In Ref. 2; AAD12553." evidence="5" ref="2">
    <original>V</original>
    <variation>A</variation>
    <location>
        <position position="243"/>
    </location>
</feature>
<feature type="sequence conflict" description="In Ref. 2; AAD12553." evidence="5" ref="2">
    <original>I</original>
    <variation>V</variation>
    <location>
        <position position="249"/>
    </location>
</feature>
<protein>
    <recommendedName>
        <fullName>Cytochrome b</fullName>
    </recommendedName>
    <alternativeName>
        <fullName>Complex III subunit 3</fullName>
    </alternativeName>
    <alternativeName>
        <fullName>Complex III subunit III</fullName>
    </alternativeName>
    <alternativeName>
        <fullName>Cytochrome b-c1 complex subunit 3</fullName>
    </alternativeName>
    <alternativeName>
        <fullName>Ubiquinol-cytochrome-c reductase complex cytochrome b subunit</fullName>
    </alternativeName>
</protein>
<gene>
    <name type="primary">MT-CYB</name>
    <name type="synonym">COB</name>
    <name type="synonym">CYTB</name>
    <name type="synonym">MTCYB</name>
</gene>
<proteinExistence type="inferred from homology"/>